<evidence type="ECO:0000255" key="1">
    <source>
        <dbReference type="HAMAP-Rule" id="MF_00017"/>
    </source>
</evidence>
<accession>C4L8U4</accession>
<keyword id="KW-0227">DNA damage</keyword>
<keyword id="KW-0233">DNA recombination</keyword>
<keyword id="KW-0234">DNA repair</keyword>
<keyword id="KW-0479">Metal-binding</keyword>
<keyword id="KW-1185">Reference proteome</keyword>
<keyword id="KW-0862">Zinc</keyword>
<keyword id="KW-0863">Zinc-finger</keyword>
<feature type="chain" id="PRO_1000201872" description="Recombination protein RecR">
    <location>
        <begin position="1"/>
        <end position="200"/>
    </location>
</feature>
<feature type="domain" description="Toprim" evidence="1">
    <location>
        <begin position="81"/>
        <end position="176"/>
    </location>
</feature>
<feature type="zinc finger region" description="C4-type" evidence="1">
    <location>
        <begin position="57"/>
        <end position="72"/>
    </location>
</feature>
<proteinExistence type="inferred from homology"/>
<dbReference type="EMBL" id="CP001616">
    <property type="protein sequence ID" value="ACQ93814.1"/>
    <property type="molecule type" value="Genomic_DNA"/>
</dbReference>
<dbReference type="RefSeq" id="WP_015879282.1">
    <property type="nucleotide sequence ID" value="NC_012691.1"/>
</dbReference>
<dbReference type="SMR" id="C4L8U4"/>
<dbReference type="STRING" id="595494.Tola_2215"/>
<dbReference type="KEGG" id="tau:Tola_2215"/>
<dbReference type="eggNOG" id="COG0353">
    <property type="taxonomic scope" value="Bacteria"/>
</dbReference>
<dbReference type="HOGENOM" id="CLU_060739_1_2_6"/>
<dbReference type="OrthoDB" id="9802672at2"/>
<dbReference type="Proteomes" id="UP000009073">
    <property type="component" value="Chromosome"/>
</dbReference>
<dbReference type="GO" id="GO:0003677">
    <property type="term" value="F:DNA binding"/>
    <property type="evidence" value="ECO:0007669"/>
    <property type="project" value="UniProtKB-UniRule"/>
</dbReference>
<dbReference type="GO" id="GO:0008270">
    <property type="term" value="F:zinc ion binding"/>
    <property type="evidence" value="ECO:0007669"/>
    <property type="project" value="UniProtKB-KW"/>
</dbReference>
<dbReference type="GO" id="GO:0006310">
    <property type="term" value="P:DNA recombination"/>
    <property type="evidence" value="ECO:0007669"/>
    <property type="project" value="UniProtKB-UniRule"/>
</dbReference>
<dbReference type="GO" id="GO:0006281">
    <property type="term" value="P:DNA repair"/>
    <property type="evidence" value="ECO:0007669"/>
    <property type="project" value="UniProtKB-UniRule"/>
</dbReference>
<dbReference type="CDD" id="cd01025">
    <property type="entry name" value="TOPRIM_recR"/>
    <property type="match status" value="1"/>
</dbReference>
<dbReference type="FunFam" id="3.40.1360.10:FF:000001">
    <property type="entry name" value="Recombination protein RecR"/>
    <property type="match status" value="1"/>
</dbReference>
<dbReference type="Gene3D" id="3.40.1360.10">
    <property type="match status" value="1"/>
</dbReference>
<dbReference type="Gene3D" id="6.10.250.240">
    <property type="match status" value="1"/>
</dbReference>
<dbReference type="Gene3D" id="1.10.8.420">
    <property type="entry name" value="RecR Domain 1"/>
    <property type="match status" value="1"/>
</dbReference>
<dbReference type="HAMAP" id="MF_00017">
    <property type="entry name" value="RecR"/>
    <property type="match status" value="1"/>
</dbReference>
<dbReference type="InterPro" id="IPR000093">
    <property type="entry name" value="DNA_Rcmb_RecR"/>
</dbReference>
<dbReference type="InterPro" id="IPR023627">
    <property type="entry name" value="Rcmb_RecR"/>
</dbReference>
<dbReference type="InterPro" id="IPR015967">
    <property type="entry name" value="Rcmb_RecR_Znf"/>
</dbReference>
<dbReference type="InterPro" id="IPR006171">
    <property type="entry name" value="TOPRIM_dom"/>
</dbReference>
<dbReference type="InterPro" id="IPR034137">
    <property type="entry name" value="TOPRIM_RecR"/>
</dbReference>
<dbReference type="NCBIfam" id="TIGR00615">
    <property type="entry name" value="recR"/>
    <property type="match status" value="1"/>
</dbReference>
<dbReference type="PANTHER" id="PTHR30446">
    <property type="entry name" value="RECOMBINATION PROTEIN RECR"/>
    <property type="match status" value="1"/>
</dbReference>
<dbReference type="PANTHER" id="PTHR30446:SF0">
    <property type="entry name" value="RECOMBINATION PROTEIN RECR"/>
    <property type="match status" value="1"/>
</dbReference>
<dbReference type="Pfam" id="PF21175">
    <property type="entry name" value="RecR_C"/>
    <property type="match status" value="1"/>
</dbReference>
<dbReference type="Pfam" id="PF21176">
    <property type="entry name" value="RecR_HhH"/>
    <property type="match status" value="1"/>
</dbReference>
<dbReference type="Pfam" id="PF02132">
    <property type="entry name" value="RecR_ZnF"/>
    <property type="match status" value="1"/>
</dbReference>
<dbReference type="Pfam" id="PF13662">
    <property type="entry name" value="Toprim_4"/>
    <property type="match status" value="1"/>
</dbReference>
<dbReference type="SMART" id="SM00493">
    <property type="entry name" value="TOPRIM"/>
    <property type="match status" value="1"/>
</dbReference>
<dbReference type="SUPFAM" id="SSF111304">
    <property type="entry name" value="Recombination protein RecR"/>
    <property type="match status" value="1"/>
</dbReference>
<dbReference type="PROSITE" id="PS50880">
    <property type="entry name" value="TOPRIM"/>
    <property type="match status" value="1"/>
</dbReference>
<comment type="function">
    <text evidence="1">May play a role in DNA repair. It seems to be involved in an RecBC-independent recombinational process of DNA repair. It may act with RecF and RecO.</text>
</comment>
<comment type="similarity">
    <text evidence="1">Belongs to the RecR family.</text>
</comment>
<gene>
    <name evidence="1" type="primary">recR</name>
    <name type="ordered locus">Tola_2215</name>
</gene>
<sequence length="200" mass="21976">MKFSPLLDALIRELQVLPGVGPKSAQRMAFQLLERERKRGMQLGQTLQRALTEIGHCQHCRTFTENSLCDICANPKRAESGQLCIVETPADVAAIEQTHLYSGRYFVLMGHLSPLDGIGPKELGLDQLDNVLQGGQWKEVILATNPTIEGDATAFYIASMAKRYQINITRIAHGVPVGGELELVDGTTLSHSLSGRRPLE</sequence>
<protein>
    <recommendedName>
        <fullName evidence="1">Recombination protein RecR</fullName>
    </recommendedName>
</protein>
<organism>
    <name type="scientific">Tolumonas auensis (strain DSM 9187 / NBRC 110442 / TA 4)</name>
    <dbReference type="NCBI Taxonomy" id="595494"/>
    <lineage>
        <taxon>Bacteria</taxon>
        <taxon>Pseudomonadati</taxon>
        <taxon>Pseudomonadota</taxon>
        <taxon>Gammaproteobacteria</taxon>
        <taxon>Aeromonadales</taxon>
        <taxon>Aeromonadaceae</taxon>
        <taxon>Tolumonas</taxon>
    </lineage>
</organism>
<name>RECR_TOLAT</name>
<reference key="1">
    <citation type="submission" date="2009-05" db="EMBL/GenBank/DDBJ databases">
        <title>Complete sequence of Tolumonas auensis DSM 9187.</title>
        <authorList>
            <consortium name="US DOE Joint Genome Institute"/>
            <person name="Lucas S."/>
            <person name="Copeland A."/>
            <person name="Lapidus A."/>
            <person name="Glavina del Rio T."/>
            <person name="Tice H."/>
            <person name="Bruce D."/>
            <person name="Goodwin L."/>
            <person name="Pitluck S."/>
            <person name="Chertkov O."/>
            <person name="Brettin T."/>
            <person name="Detter J.C."/>
            <person name="Han C."/>
            <person name="Larimer F."/>
            <person name="Land M."/>
            <person name="Hauser L."/>
            <person name="Kyrpides N."/>
            <person name="Mikhailova N."/>
            <person name="Spring S."/>
            <person name="Beller H."/>
        </authorList>
    </citation>
    <scope>NUCLEOTIDE SEQUENCE [LARGE SCALE GENOMIC DNA]</scope>
    <source>
        <strain>DSM 9187 / NBRC 110442 / TA 4</strain>
    </source>
</reference>